<evidence type="ECO:0000256" key="1">
    <source>
        <dbReference type="SAM" id="MobiDB-lite"/>
    </source>
</evidence>
<evidence type="ECO:0000269" key="2">
    <source>
    </source>
</evidence>
<evidence type="ECO:0000269" key="3">
    <source>
    </source>
</evidence>
<evidence type="ECO:0000303" key="4">
    <source>
    </source>
</evidence>
<evidence type="ECO:0000305" key="5"/>
<evidence type="ECO:0000312" key="6">
    <source>
        <dbReference type="Araport" id="AT1G72390"/>
    </source>
</evidence>
<evidence type="ECO:0000312" key="7">
    <source>
        <dbReference type="EMBL" id="AAG52583.1"/>
    </source>
</evidence>
<evidence type="ECO:0000312" key="8">
    <source>
        <dbReference type="EMBL" id="AAG52585.1"/>
    </source>
</evidence>
<evidence type="ECO:0007744" key="9">
    <source>
    </source>
</evidence>
<protein>
    <recommendedName>
        <fullName evidence="4">Protein PHYTOCHROME-DEPENDENT LATE-FLOWERING</fullName>
    </recommendedName>
</protein>
<accession>F4IDB2</accession>
<accession>Q9C9D6</accession>
<accession>Q9C9D7</accession>
<dbReference type="EMBL" id="AC016529">
    <property type="protein sequence ID" value="AAG52583.1"/>
    <property type="status" value="ALT_SEQ"/>
    <property type="molecule type" value="Genomic_DNA"/>
</dbReference>
<dbReference type="EMBL" id="AC016529">
    <property type="protein sequence ID" value="AAG52585.1"/>
    <property type="status" value="ALT_SEQ"/>
    <property type="molecule type" value="Genomic_DNA"/>
</dbReference>
<dbReference type="EMBL" id="CP002684">
    <property type="protein sequence ID" value="AEE35315.1"/>
    <property type="molecule type" value="Genomic_DNA"/>
</dbReference>
<dbReference type="EMBL" id="CP002684">
    <property type="protein sequence ID" value="ANM59278.1"/>
    <property type="molecule type" value="Genomic_DNA"/>
</dbReference>
<dbReference type="PIR" id="G96747">
    <property type="entry name" value="G96747"/>
</dbReference>
<dbReference type="PIR" id="H96747">
    <property type="entry name" value="H96747"/>
</dbReference>
<dbReference type="RefSeq" id="NP_001321648.1">
    <property type="nucleotide sequence ID" value="NM_001334526.1"/>
</dbReference>
<dbReference type="RefSeq" id="NP_177383.5">
    <property type="nucleotide sequence ID" value="NM_105898.7"/>
</dbReference>
<dbReference type="FunCoup" id="F4IDB2">
    <property type="interactions" value="1552"/>
</dbReference>
<dbReference type="STRING" id="3702.F4IDB2"/>
<dbReference type="GlyGen" id="F4IDB2">
    <property type="glycosylation" value="3 sites, 1 O-linked glycan (3 sites)"/>
</dbReference>
<dbReference type="iPTMnet" id="F4IDB2"/>
<dbReference type="PaxDb" id="3702-AT1G72390.1"/>
<dbReference type="ProteomicsDB" id="236350"/>
<dbReference type="EnsemblPlants" id="AT1G72390.1">
    <property type="protein sequence ID" value="AT1G72390.1"/>
    <property type="gene ID" value="AT1G72390"/>
</dbReference>
<dbReference type="EnsemblPlants" id="AT1G72390.2">
    <property type="protein sequence ID" value="AT1G72390.2"/>
    <property type="gene ID" value="AT1G72390"/>
</dbReference>
<dbReference type="GeneID" id="843571"/>
<dbReference type="Gramene" id="AT1G72390.1">
    <property type="protein sequence ID" value="AT1G72390.1"/>
    <property type="gene ID" value="AT1G72390"/>
</dbReference>
<dbReference type="Gramene" id="AT1G72390.2">
    <property type="protein sequence ID" value="AT1G72390.2"/>
    <property type="gene ID" value="AT1G72390"/>
</dbReference>
<dbReference type="KEGG" id="ath:AT1G72390"/>
<dbReference type="Araport" id="AT1G72390"/>
<dbReference type="TAIR" id="AT1G72390">
    <property type="gene designation" value="PHL"/>
</dbReference>
<dbReference type="eggNOG" id="ENOG502SE7N">
    <property type="taxonomic scope" value="Eukaryota"/>
</dbReference>
<dbReference type="HOGENOM" id="CLU_006336_0_0_1"/>
<dbReference type="InParanoid" id="F4IDB2"/>
<dbReference type="OMA" id="VEMQQYA"/>
<dbReference type="PRO" id="PR:F4IDB2"/>
<dbReference type="Proteomes" id="UP000006548">
    <property type="component" value="Chromosome 1"/>
</dbReference>
<dbReference type="ExpressionAtlas" id="F4IDB2">
    <property type="expression patterns" value="baseline and differential"/>
</dbReference>
<dbReference type="GO" id="GO:0005737">
    <property type="term" value="C:cytoplasm"/>
    <property type="evidence" value="ECO:0000314"/>
    <property type="project" value="UniProtKB"/>
</dbReference>
<dbReference type="GO" id="GO:0016604">
    <property type="term" value="C:nuclear body"/>
    <property type="evidence" value="ECO:0000314"/>
    <property type="project" value="UniProtKB"/>
</dbReference>
<dbReference type="GO" id="GO:0005634">
    <property type="term" value="C:nucleus"/>
    <property type="evidence" value="ECO:0000314"/>
    <property type="project" value="UniProtKB"/>
</dbReference>
<dbReference type="GO" id="GO:0000124">
    <property type="term" value="C:SAGA complex"/>
    <property type="evidence" value="ECO:0007669"/>
    <property type="project" value="InterPro"/>
</dbReference>
<dbReference type="GO" id="GO:0003712">
    <property type="term" value="F:transcription coregulator activity"/>
    <property type="evidence" value="ECO:0007669"/>
    <property type="project" value="InterPro"/>
</dbReference>
<dbReference type="GO" id="GO:0007623">
    <property type="term" value="P:circadian rhythm"/>
    <property type="evidence" value="ECO:0000270"/>
    <property type="project" value="UniProtKB"/>
</dbReference>
<dbReference type="GO" id="GO:0009908">
    <property type="term" value="P:flower development"/>
    <property type="evidence" value="ECO:0007669"/>
    <property type="project" value="UniProtKB-KW"/>
</dbReference>
<dbReference type="GO" id="GO:0048574">
    <property type="term" value="P:long-day photoperiodism, flowering"/>
    <property type="evidence" value="ECO:0000315"/>
    <property type="project" value="UniProtKB"/>
</dbReference>
<dbReference type="GO" id="GO:0048510">
    <property type="term" value="P:regulation of timing of transition from vegetative to reproductive phase"/>
    <property type="evidence" value="ECO:0000315"/>
    <property type="project" value="UniProtKB"/>
</dbReference>
<dbReference type="GO" id="GO:0009416">
    <property type="term" value="P:response to light stimulus"/>
    <property type="evidence" value="ECO:0000270"/>
    <property type="project" value="UniProtKB"/>
</dbReference>
<dbReference type="InterPro" id="IPR046467">
    <property type="entry name" value="PHL_dom"/>
</dbReference>
<dbReference type="InterPro" id="IPR021950">
    <property type="entry name" value="Spt20"/>
</dbReference>
<dbReference type="InterPro" id="IPR046468">
    <property type="entry name" value="Spt20-like_SEP"/>
</dbReference>
<dbReference type="PANTHER" id="PTHR13526">
    <property type="entry name" value="TRANSCRIPTION FACTOR SPT20 HOMOLOG"/>
    <property type="match status" value="1"/>
</dbReference>
<dbReference type="PANTHER" id="PTHR13526:SF8">
    <property type="entry name" value="TRANSCRIPTION FACTOR SPT20 HOMOLOG"/>
    <property type="match status" value="1"/>
</dbReference>
<dbReference type="Pfam" id="PF20474">
    <property type="entry name" value="PHL"/>
    <property type="match status" value="1"/>
</dbReference>
<dbReference type="Pfam" id="PF12090">
    <property type="entry name" value="Spt20_SEP"/>
    <property type="match status" value="1"/>
</dbReference>
<keyword id="KW-0963">Cytoplasm</keyword>
<keyword id="KW-0287">Flowering</keyword>
<keyword id="KW-0539">Nucleus</keyword>
<keyword id="KW-0675">Receptor</keyword>
<keyword id="KW-1185">Reference proteome</keyword>
<feature type="chain" id="PRO_0000445019" description="Protein PHYTOCHROME-DEPENDENT LATE-FLOWERING">
    <location>
        <begin position="1"/>
        <end position="1325"/>
    </location>
</feature>
<feature type="region of interest" description="Disordered" evidence="1">
    <location>
        <begin position="313"/>
        <end position="371"/>
    </location>
</feature>
<feature type="region of interest" description="Disordered" evidence="1">
    <location>
        <begin position="462"/>
        <end position="558"/>
    </location>
</feature>
<feature type="region of interest" description="Disordered" evidence="1">
    <location>
        <begin position="593"/>
        <end position="616"/>
    </location>
</feature>
<feature type="region of interest" description="Disordered" evidence="1">
    <location>
        <begin position="852"/>
        <end position="875"/>
    </location>
</feature>
<feature type="region of interest" description="Disordered" evidence="1">
    <location>
        <begin position="1160"/>
        <end position="1325"/>
    </location>
</feature>
<feature type="compositionally biased region" description="Polar residues" evidence="1">
    <location>
        <begin position="313"/>
        <end position="331"/>
    </location>
</feature>
<feature type="compositionally biased region" description="Polar residues" evidence="1">
    <location>
        <begin position="504"/>
        <end position="515"/>
    </location>
</feature>
<feature type="compositionally biased region" description="Basic and acidic residues" evidence="1">
    <location>
        <begin position="518"/>
        <end position="529"/>
    </location>
</feature>
<feature type="compositionally biased region" description="Low complexity" evidence="1">
    <location>
        <begin position="596"/>
        <end position="607"/>
    </location>
</feature>
<feature type="compositionally biased region" description="Polar residues" evidence="1">
    <location>
        <begin position="863"/>
        <end position="875"/>
    </location>
</feature>
<feature type="compositionally biased region" description="Low complexity" evidence="1">
    <location>
        <begin position="1160"/>
        <end position="1224"/>
    </location>
</feature>
<feature type="compositionally biased region" description="Polar residues" evidence="1">
    <location>
        <begin position="1225"/>
        <end position="1239"/>
    </location>
</feature>
<feature type="compositionally biased region" description="Low complexity" evidence="1">
    <location>
        <begin position="1240"/>
        <end position="1262"/>
    </location>
</feature>
<feature type="compositionally biased region" description="Polar residues" evidence="1">
    <location>
        <begin position="1263"/>
        <end position="1286"/>
    </location>
</feature>
<feature type="compositionally biased region" description="Polar residues" evidence="1">
    <location>
        <begin position="1293"/>
        <end position="1325"/>
    </location>
</feature>
<feature type="mutagenesis site" description="In phl-2; late flowering, especially under long-day conditions." evidence="2">
    <original>A</original>
    <variation>V</variation>
    <location>
        <position position="1026"/>
    </location>
</feature>
<sequence length="1325" mass="143310">MGVSFKISKVGRKFRPKISTELATPDSPKAIVLSGKPKATDDSNIGDVSGFSKPSLPDISPDHEVSFILSLYPNGYSIGKTSEAMQQISFRDVPKVLHPYDRAAEGLLSAIEAGRLPGDILEDIPCKFVDGVVICEVHDYRKHTSSQVSPVINKLRLKMSLENVVKDIPSMSDNSWTYGDLMEVESRILKALQPELCLDPLPRLDRLSKNPLTAKLDLSLSTLRRKRLRQMAEVTVMSQNKIQGKKVCIDRLPESSERGNLPGHLIMQQTNNNQAIQNLGTNMLAGLRSQPLQDAPNSSLALVPPQQQRYMGIGSTRNTQDQGSNSVSVSGASPGGLDAMLPYGSDSMNPGTSFHRKRESQEGQMSSMPGLNKRTRVSHMGPDGVPQQQLGQRMDGLHGSDTNWKNTLLQHQDMLGRSIQYPNTSIQRFSPHQMEGVMNQEGGPMQFPASQQGGMKYTSKEEPFETGKIDGGTRNNIPGVGSDANDLDPRIQSRMPHNAFIRSNFPQTSWNVNPGQQIEKEPKKEEQFSRRISAQSPRLSAGGPPQSPLSSKSGEFSGGSMGTHYGAVAAAQKDKAVTSIPAIGATQSVGSSANEAMQQRQHQAQMAAKRRTNSLPKTQVISTVGSPVSVNTISVPVNARSPSVGPQTLGDHAILDRFSKIERVAARYQLNCKKHKVDEYSRRPRVYAKQPLTVCLSNLSNEEVFKDEDEALSKSIFGGSMNTYKTRVIHFGQMERVMQGSVPSFIPRNRTRLVMSEKAVDGTVAWYQGDVDEGDVFQAEDFLLALPNTHIADLLATQFKSLMAREGYMIEEHIMAKPNRGDTGPISSHPNSAGGYPRGYSANDMQQYGDAVAGQASGEASKHGNTGNTPNNSTQNILANARMVPPTNSQALQMSQGLLSGVSMPMQPQQLDPQQSALLSSHSQQKNQQSMFTQQQHPQMQRPSMILPTNPLSAINSMSQSSGMQPGGQMANKYSPLQLQMLQQQQQAAVQKKIMMGLGSGVGMGMGMGMGMGMGSMGNSIAGLGALGNQLNMAGRGMGGTGISSSMSVPGIGNMGQNPMNLNPASNLNAISQQLRSGALTPQQNALFTQIRMGMANRGGVMGAPQTGISGVSGTRQMHPSSAGLSMLDQNRANLQRAAAMGNMGPPKLMPGMMNLYMNQQQQQQQLQQQPQQQQLQHQQQLQQPMSQPSQQLAQSPQQQQQLQQHEQPQQAQQQQQATASPLQSVLSPPQVGSPSAGITQQQLQQSSPQQMSQRTPMSPQQVNQRTPMSPQISSGAMHPMSTSNLEGCPASPQLSSQTMGSVGSITNSPMELQGPKNNSAGNNS</sequence>
<organism>
    <name type="scientific">Arabidopsis thaliana</name>
    <name type="common">Mouse-ear cress</name>
    <dbReference type="NCBI Taxonomy" id="3702"/>
    <lineage>
        <taxon>Eukaryota</taxon>
        <taxon>Viridiplantae</taxon>
        <taxon>Streptophyta</taxon>
        <taxon>Embryophyta</taxon>
        <taxon>Tracheophyta</taxon>
        <taxon>Spermatophyta</taxon>
        <taxon>Magnoliopsida</taxon>
        <taxon>eudicotyledons</taxon>
        <taxon>Gunneridae</taxon>
        <taxon>Pentapetalae</taxon>
        <taxon>rosids</taxon>
        <taxon>malvids</taxon>
        <taxon>Brassicales</taxon>
        <taxon>Brassicaceae</taxon>
        <taxon>Camelineae</taxon>
        <taxon>Arabidopsis</taxon>
    </lineage>
</organism>
<gene>
    <name evidence="4" type="primary">PHL</name>
    <name evidence="6" type="ordered locus">At1g72390</name>
    <name evidence="7" type="ORF">T10D10.14</name>
    <name evidence="8" type="ORF">T10D10.15</name>
</gene>
<comment type="function">
    <text evidence="2 3">Triggers photoperiod-monitored flowering by repressing PHYB-dependent flowering negative regulation, probably through physical interactions with PHYB and CO.</text>
</comment>
<comment type="subunit">
    <text evidence="2">Component of a red light-dependent nuclear complex made of PHL, PHYB and CO. Interacts directly with PHYB and CO; CO binding requires the presence of PHYB.</text>
</comment>
<comment type="subcellular location">
    <subcellularLocation>
        <location evidence="2">Nucleus</location>
    </subcellularLocation>
    <subcellularLocation>
        <location evidence="2">Nucleus</location>
        <location evidence="2">Nuclear body</location>
    </subcellularLocation>
    <subcellularLocation>
        <location evidence="2">Cytoplasmic granule</location>
    </subcellularLocation>
    <subcellularLocation>
        <location evidence="2">Cytoplasm</location>
    </subcellularLocation>
    <text evidence="2">Circadian clock-regulated subcellular localization. During the night, mainly present in the cytoplasm. During the day, moves and accumulates progressively in the nuclei.</text>
</comment>
<comment type="tissue specificity">
    <text evidence="2">Mostly expressed in cotyledons and leaves, both in mesophyll and vasculature cells. Also present in roots, hypocotyls and shoot apices.</text>
</comment>
<comment type="induction">
    <text evidence="3">Repressed post-transcriptionally by white light (at protein level).</text>
</comment>
<comment type="disruption phenotype">
    <text evidence="2 3">Late flowering, especially under long-day conditions (PubMed:24127609, PubMed:24614229). Reduced expression of FT and SOC1 (PubMed:24127609).</text>
</comment>
<comment type="sequence caution" evidence="5">
    <conflict type="erroneous gene model prediction">
        <sequence resource="EMBL-CDS" id="AAG52583"/>
    </conflict>
</comment>
<comment type="sequence caution" evidence="5">
    <conflict type="erroneous gene model prediction">
        <sequence resource="EMBL-CDS" id="AAG52585"/>
    </conflict>
</comment>
<name>PHL_ARATH</name>
<proteinExistence type="evidence at protein level"/>
<reference key="1">
    <citation type="journal article" date="2000" name="Nature">
        <title>Sequence and analysis of chromosome 1 of the plant Arabidopsis thaliana.</title>
        <authorList>
            <person name="Theologis A."/>
            <person name="Ecker J.R."/>
            <person name="Palm C.J."/>
            <person name="Federspiel N.A."/>
            <person name="Kaul S."/>
            <person name="White O."/>
            <person name="Alonso J."/>
            <person name="Altafi H."/>
            <person name="Araujo R."/>
            <person name="Bowman C.L."/>
            <person name="Brooks S.Y."/>
            <person name="Buehler E."/>
            <person name="Chan A."/>
            <person name="Chao Q."/>
            <person name="Chen H."/>
            <person name="Cheuk R.F."/>
            <person name="Chin C.W."/>
            <person name="Chung M.K."/>
            <person name="Conn L."/>
            <person name="Conway A.B."/>
            <person name="Conway A.R."/>
            <person name="Creasy T.H."/>
            <person name="Dewar K."/>
            <person name="Dunn P."/>
            <person name="Etgu P."/>
            <person name="Feldblyum T.V."/>
            <person name="Feng J.-D."/>
            <person name="Fong B."/>
            <person name="Fujii C.Y."/>
            <person name="Gill J.E."/>
            <person name="Goldsmith A.D."/>
            <person name="Haas B."/>
            <person name="Hansen N.F."/>
            <person name="Hughes B."/>
            <person name="Huizar L."/>
            <person name="Hunter J.L."/>
            <person name="Jenkins J."/>
            <person name="Johnson-Hopson C."/>
            <person name="Khan S."/>
            <person name="Khaykin E."/>
            <person name="Kim C.J."/>
            <person name="Koo H.L."/>
            <person name="Kremenetskaia I."/>
            <person name="Kurtz D.B."/>
            <person name="Kwan A."/>
            <person name="Lam B."/>
            <person name="Langin-Hooper S."/>
            <person name="Lee A."/>
            <person name="Lee J.M."/>
            <person name="Lenz C.A."/>
            <person name="Li J.H."/>
            <person name="Li Y.-P."/>
            <person name="Lin X."/>
            <person name="Liu S.X."/>
            <person name="Liu Z.A."/>
            <person name="Luros J.S."/>
            <person name="Maiti R."/>
            <person name="Marziali A."/>
            <person name="Militscher J."/>
            <person name="Miranda M."/>
            <person name="Nguyen M."/>
            <person name="Nierman W.C."/>
            <person name="Osborne B.I."/>
            <person name="Pai G."/>
            <person name="Peterson J."/>
            <person name="Pham P.K."/>
            <person name="Rizzo M."/>
            <person name="Rooney T."/>
            <person name="Rowley D."/>
            <person name="Sakano H."/>
            <person name="Salzberg S.L."/>
            <person name="Schwartz J.R."/>
            <person name="Shinn P."/>
            <person name="Southwick A.M."/>
            <person name="Sun H."/>
            <person name="Tallon L.J."/>
            <person name="Tambunga G."/>
            <person name="Toriumi M.J."/>
            <person name="Town C.D."/>
            <person name="Utterback T."/>
            <person name="Van Aken S."/>
            <person name="Vaysberg M."/>
            <person name="Vysotskaia V.S."/>
            <person name="Walker M."/>
            <person name="Wu D."/>
            <person name="Yu G."/>
            <person name="Fraser C.M."/>
            <person name="Venter J.C."/>
            <person name="Davis R.W."/>
        </authorList>
    </citation>
    <scope>NUCLEOTIDE SEQUENCE [LARGE SCALE GENOMIC DNA]</scope>
    <source>
        <strain>cv. Columbia</strain>
    </source>
</reference>
<reference key="2">
    <citation type="journal article" date="2017" name="Plant J.">
        <title>Araport11: a complete reannotation of the Arabidopsis thaliana reference genome.</title>
        <authorList>
            <person name="Cheng C.Y."/>
            <person name="Krishnakumar V."/>
            <person name="Chan A.P."/>
            <person name="Thibaud-Nissen F."/>
            <person name="Schobel S."/>
            <person name="Town C.D."/>
        </authorList>
    </citation>
    <scope>GENOME REANNOTATION</scope>
    <source>
        <strain>cv. Columbia</strain>
    </source>
</reference>
<reference evidence="9" key="3">
    <citation type="journal article" date="2009" name="Plant Physiol.">
        <title>Large-scale Arabidopsis phosphoproteome profiling reveals novel chloroplast kinase substrates and phosphorylation networks.</title>
        <authorList>
            <person name="Reiland S."/>
            <person name="Messerli G."/>
            <person name="Baerenfaller K."/>
            <person name="Gerrits B."/>
            <person name="Endler A."/>
            <person name="Grossmann J."/>
            <person name="Gruissem W."/>
            <person name="Baginsky S."/>
        </authorList>
    </citation>
    <scope>IDENTIFICATION BY MASS SPECTROMETRY [LARGE SCALE ANALYSIS]</scope>
</reference>
<reference key="4">
    <citation type="journal article" date="2013" name="Proc. Natl. Acad. Sci. U.S.A.">
        <title>PHYTOCHROME-DEPENDENT LATE-FLOWERING accelerates flowering through physical interactions with phytochrome B and CONSTANS.</title>
        <authorList>
            <person name="Endo M."/>
            <person name="Tanigawa Y."/>
            <person name="Murakami T."/>
            <person name="Araki T."/>
            <person name="Nagatani A."/>
        </authorList>
    </citation>
    <scope>FUNCTION</scope>
    <scope>DISRUPTION PHENOTYPE</scope>
    <scope>MUTAGENESIS OF ALA-1026</scope>
    <scope>INTERACTION WITH PHYB AND CO</scope>
    <scope>SUBCELLULAR LOCATION</scope>
    <scope>TISSUE SPECIFICITY</scope>
</reference>
<reference key="5">
    <citation type="journal article" date="2014" name="Plant Signal. Behav.">
        <title>Light-dependent destabilization of PHL in Arabidopsis.</title>
        <authorList>
            <person name="Endo M."/>
            <person name="Kudo D."/>
            <person name="Koto T."/>
            <person name="Shimizu H."/>
            <person name="Araki T."/>
        </authorList>
    </citation>
    <scope>FUNCTION</scope>
    <scope>DISRUPTION PHENOTYPE</scope>
    <scope>REPRESSION BY WHITE LIGHT</scope>
</reference>